<proteinExistence type="evidence at transcript level"/>
<comment type="alternative products">
    <event type="alternative splicing"/>
    <isoform>
        <id>Q8C627-1</id>
        <name>1</name>
        <sequence type="displayed"/>
    </isoform>
    <isoform>
        <id>Q8C627-2</id>
        <name>2</name>
        <sequence type="described" ref="VSP_029102 VSP_029103"/>
    </isoform>
</comment>
<comment type="similarity">
    <text evidence="4">Belongs to the FAM221 family.</text>
</comment>
<sequence>MEANKTTEGPQDTQDAKEQPSLEDTNAEDLYEATTHETPLQPSSSQKHFQPPEIHLETPASLNPDTKGAEGLQDSSVSGTPPVKSSSSGLLSLPPQLSPQSVTSLEKAIAEIPLEEFGYDSPISKVKEEPLQLSPTANIPEYGSPISEVQKESLEVSPTANIPEYGSPISEVQKEPLEVSSTANIPKYESPVSEVQKEPLEVSPTASIPESSHELTSDKVPQTQVPESEHFPKHSFSESPTQAKEDESTKEGEAGEDELAVGTSKIPAAKPGLRAKKKKEKRAGGVTSRPVVPAKRAELVEMAKAVHREQFDDQVNNLFQWEKDSTLKAIQTGIYIGWRCPHYLWDCFRIGDESKCFCGHLLREHQIISDLSVPCSVSQCRCLMFCFIPSRPEEVGEFWLKKRATFDPKAWRAQCRCKHTHEEHAATGAHPCRHRGCFCPSFESNFLCVACDRRWEEHETFFETGDTRRKGKRPYGANNIKNWHRTY</sequence>
<evidence type="ECO:0000250" key="1">
    <source>
        <dbReference type="UniProtKB" id="Q66HD8"/>
    </source>
</evidence>
<evidence type="ECO:0000256" key="2">
    <source>
        <dbReference type="SAM" id="MobiDB-lite"/>
    </source>
</evidence>
<evidence type="ECO:0000303" key="3">
    <source>
    </source>
</evidence>
<evidence type="ECO:0000305" key="4"/>
<accession>Q8C627</accession>
<accession>Q0VD71</accession>
<accession>Q8BGP2</accession>
<protein>
    <recommendedName>
        <fullName>Protein FAM221B</fullName>
    </recommendedName>
</protein>
<gene>
    <name type="primary">Fam221b</name>
</gene>
<feature type="chain" id="PRO_0000309265" description="Protein FAM221B">
    <location>
        <begin position="1"/>
        <end position="487"/>
    </location>
</feature>
<feature type="region of interest" description="Disordered" evidence="2">
    <location>
        <begin position="1"/>
        <end position="103"/>
    </location>
</feature>
<feature type="region of interest" description="Disordered" evidence="2">
    <location>
        <begin position="132"/>
        <end position="289"/>
    </location>
</feature>
<feature type="compositionally biased region" description="Polar residues" evidence="2">
    <location>
        <begin position="1"/>
        <end position="13"/>
    </location>
</feature>
<feature type="compositionally biased region" description="Polar residues" evidence="2">
    <location>
        <begin position="36"/>
        <end position="48"/>
    </location>
</feature>
<feature type="compositionally biased region" description="Low complexity" evidence="2">
    <location>
        <begin position="81"/>
        <end position="103"/>
    </location>
</feature>
<feature type="compositionally biased region" description="Basic and acidic residues" evidence="2">
    <location>
        <begin position="227"/>
        <end position="236"/>
    </location>
</feature>
<feature type="compositionally biased region" description="Basic and acidic residues" evidence="2">
    <location>
        <begin position="243"/>
        <end position="253"/>
    </location>
</feature>
<feature type="modified residue" description="Phosphoserine" evidence="1">
    <location>
        <position position="248"/>
    </location>
</feature>
<feature type="splice variant" id="VSP_029102" description="In isoform 2." evidence="3">
    <original>IYIGWRCPH</original>
    <variation>EPRWPSRGL</variation>
    <location>
        <begin position="334"/>
        <end position="342"/>
    </location>
</feature>
<feature type="splice variant" id="VSP_029103" description="In isoform 2." evidence="3">
    <location>
        <begin position="343"/>
        <end position="487"/>
    </location>
</feature>
<feature type="sequence conflict" description="In Ref. 3; AAI19805/AAI22882." evidence="4" ref="3">
    <original>T</original>
    <variation>I</variation>
    <location>
        <position position="66"/>
    </location>
</feature>
<organism>
    <name type="scientific">Mus musculus</name>
    <name type="common">Mouse</name>
    <dbReference type="NCBI Taxonomy" id="10090"/>
    <lineage>
        <taxon>Eukaryota</taxon>
        <taxon>Metazoa</taxon>
        <taxon>Chordata</taxon>
        <taxon>Craniata</taxon>
        <taxon>Vertebrata</taxon>
        <taxon>Euteleostomi</taxon>
        <taxon>Mammalia</taxon>
        <taxon>Eutheria</taxon>
        <taxon>Euarchontoglires</taxon>
        <taxon>Glires</taxon>
        <taxon>Rodentia</taxon>
        <taxon>Myomorpha</taxon>
        <taxon>Muroidea</taxon>
        <taxon>Muridae</taxon>
        <taxon>Murinae</taxon>
        <taxon>Mus</taxon>
        <taxon>Mus</taxon>
    </lineage>
</organism>
<dbReference type="EMBL" id="AK038644">
    <property type="protein sequence ID" value="BAC30077.1"/>
    <property type="molecule type" value="mRNA"/>
</dbReference>
<dbReference type="EMBL" id="AK076646">
    <property type="protein sequence ID" value="BAC36435.1"/>
    <property type="molecule type" value="mRNA"/>
</dbReference>
<dbReference type="EMBL" id="AK076680">
    <property type="protein sequence ID" value="BAC36443.1"/>
    <property type="molecule type" value="mRNA"/>
</dbReference>
<dbReference type="EMBL" id="AL732626">
    <property type="status" value="NOT_ANNOTATED_CDS"/>
    <property type="molecule type" value="Genomic_DNA"/>
</dbReference>
<dbReference type="EMBL" id="BC119804">
    <property type="protein sequence ID" value="AAI19805.1"/>
    <property type="molecule type" value="mRNA"/>
</dbReference>
<dbReference type="EMBL" id="BC122881">
    <property type="protein sequence ID" value="AAI22882.1"/>
    <property type="molecule type" value="mRNA"/>
</dbReference>
<dbReference type="CCDS" id="CCDS18107.1">
    <molecule id="Q8C627-1"/>
</dbReference>
<dbReference type="RefSeq" id="NP_780726.1">
    <molecule id="Q8C627-1"/>
    <property type="nucleotide sequence ID" value="NM_175517.3"/>
</dbReference>
<dbReference type="FunCoup" id="Q8C627">
    <property type="interactions" value="7"/>
</dbReference>
<dbReference type="STRING" id="10090.ENSMUSP00000057398"/>
<dbReference type="GlyGen" id="Q8C627">
    <property type="glycosylation" value="1 site"/>
</dbReference>
<dbReference type="iPTMnet" id="Q8C627"/>
<dbReference type="PhosphoSitePlus" id="Q8C627"/>
<dbReference type="PaxDb" id="10090-ENSMUSP00000057398"/>
<dbReference type="ProteomicsDB" id="271537">
    <molecule id="Q8C627-1"/>
</dbReference>
<dbReference type="ProteomicsDB" id="271538">
    <molecule id="Q8C627-2"/>
</dbReference>
<dbReference type="Antibodypedia" id="5672">
    <property type="antibodies" value="38 antibodies from 10 providers"/>
</dbReference>
<dbReference type="Ensembl" id="ENSMUST00000056474.7">
    <molecule id="Q8C627-1"/>
    <property type="protein sequence ID" value="ENSMUSP00000057398.7"/>
    <property type="gene ID" value="ENSMUSG00000043633.7"/>
</dbReference>
<dbReference type="GeneID" id="242408"/>
<dbReference type="KEGG" id="mmu:242408"/>
<dbReference type="UCSC" id="uc008sqt.1">
    <molecule id="Q8C627-1"/>
    <property type="organism name" value="mouse"/>
</dbReference>
<dbReference type="UCSC" id="uc008squ.1">
    <molecule id="Q8C627-2"/>
    <property type="organism name" value="mouse"/>
</dbReference>
<dbReference type="AGR" id="MGI:2441678"/>
<dbReference type="CTD" id="392307"/>
<dbReference type="MGI" id="MGI:2441678">
    <property type="gene designation" value="Fam221b"/>
</dbReference>
<dbReference type="VEuPathDB" id="HostDB:ENSMUSG00000043633"/>
<dbReference type="eggNOG" id="ENOG502R7X0">
    <property type="taxonomic scope" value="Eukaryota"/>
</dbReference>
<dbReference type="GeneTree" id="ENSGT00770000120611"/>
<dbReference type="HOGENOM" id="CLU_053868_1_0_1"/>
<dbReference type="InParanoid" id="Q8C627"/>
<dbReference type="OMA" id="CSCFESN"/>
<dbReference type="OrthoDB" id="196393at2759"/>
<dbReference type="PhylomeDB" id="Q8C627"/>
<dbReference type="TreeFam" id="TF328347"/>
<dbReference type="BioGRID-ORCS" id="242408">
    <property type="hits" value="2 hits in 76 CRISPR screens"/>
</dbReference>
<dbReference type="ChiTaRS" id="Fam221b">
    <property type="organism name" value="mouse"/>
</dbReference>
<dbReference type="PRO" id="PR:Q8C627"/>
<dbReference type="Proteomes" id="UP000000589">
    <property type="component" value="Chromosome 4"/>
</dbReference>
<dbReference type="RNAct" id="Q8C627">
    <property type="molecule type" value="protein"/>
</dbReference>
<dbReference type="Bgee" id="ENSMUSG00000043633">
    <property type="expression patterns" value="Expressed in seminiferous tubule of testis and 79 other cell types or tissues"/>
</dbReference>
<dbReference type="InterPro" id="IPR026755">
    <property type="entry name" value="Fam221a/b"/>
</dbReference>
<dbReference type="PANTHER" id="PTHR31214">
    <property type="entry name" value="PROTEIN FAM221A-RELATED"/>
    <property type="match status" value="1"/>
</dbReference>
<dbReference type="PANTHER" id="PTHR31214:SF3">
    <property type="entry name" value="PROTEIN FAM221B"/>
    <property type="match status" value="1"/>
</dbReference>
<dbReference type="Pfam" id="PF14753">
    <property type="entry name" value="FAM221"/>
    <property type="match status" value="1"/>
</dbReference>
<keyword id="KW-0025">Alternative splicing</keyword>
<keyword id="KW-0597">Phosphoprotein</keyword>
<keyword id="KW-1185">Reference proteome</keyword>
<name>F221B_MOUSE</name>
<reference key="1">
    <citation type="journal article" date="2005" name="Science">
        <title>The transcriptional landscape of the mammalian genome.</title>
        <authorList>
            <person name="Carninci P."/>
            <person name="Kasukawa T."/>
            <person name="Katayama S."/>
            <person name="Gough J."/>
            <person name="Frith M.C."/>
            <person name="Maeda N."/>
            <person name="Oyama R."/>
            <person name="Ravasi T."/>
            <person name="Lenhard B."/>
            <person name="Wells C."/>
            <person name="Kodzius R."/>
            <person name="Shimokawa K."/>
            <person name="Bajic V.B."/>
            <person name="Brenner S.E."/>
            <person name="Batalov S."/>
            <person name="Forrest A.R."/>
            <person name="Zavolan M."/>
            <person name="Davis M.J."/>
            <person name="Wilming L.G."/>
            <person name="Aidinis V."/>
            <person name="Allen J.E."/>
            <person name="Ambesi-Impiombato A."/>
            <person name="Apweiler R."/>
            <person name="Aturaliya R.N."/>
            <person name="Bailey T.L."/>
            <person name="Bansal M."/>
            <person name="Baxter L."/>
            <person name="Beisel K.W."/>
            <person name="Bersano T."/>
            <person name="Bono H."/>
            <person name="Chalk A.M."/>
            <person name="Chiu K.P."/>
            <person name="Choudhary V."/>
            <person name="Christoffels A."/>
            <person name="Clutterbuck D.R."/>
            <person name="Crowe M.L."/>
            <person name="Dalla E."/>
            <person name="Dalrymple B.P."/>
            <person name="de Bono B."/>
            <person name="Della Gatta G."/>
            <person name="di Bernardo D."/>
            <person name="Down T."/>
            <person name="Engstrom P."/>
            <person name="Fagiolini M."/>
            <person name="Faulkner G."/>
            <person name="Fletcher C.F."/>
            <person name="Fukushima T."/>
            <person name="Furuno M."/>
            <person name="Futaki S."/>
            <person name="Gariboldi M."/>
            <person name="Georgii-Hemming P."/>
            <person name="Gingeras T.R."/>
            <person name="Gojobori T."/>
            <person name="Green R.E."/>
            <person name="Gustincich S."/>
            <person name="Harbers M."/>
            <person name="Hayashi Y."/>
            <person name="Hensch T.K."/>
            <person name="Hirokawa N."/>
            <person name="Hill D."/>
            <person name="Huminiecki L."/>
            <person name="Iacono M."/>
            <person name="Ikeo K."/>
            <person name="Iwama A."/>
            <person name="Ishikawa T."/>
            <person name="Jakt M."/>
            <person name="Kanapin A."/>
            <person name="Katoh M."/>
            <person name="Kawasawa Y."/>
            <person name="Kelso J."/>
            <person name="Kitamura H."/>
            <person name="Kitano H."/>
            <person name="Kollias G."/>
            <person name="Krishnan S.P."/>
            <person name="Kruger A."/>
            <person name="Kummerfeld S.K."/>
            <person name="Kurochkin I.V."/>
            <person name="Lareau L.F."/>
            <person name="Lazarevic D."/>
            <person name="Lipovich L."/>
            <person name="Liu J."/>
            <person name="Liuni S."/>
            <person name="McWilliam S."/>
            <person name="Madan Babu M."/>
            <person name="Madera M."/>
            <person name="Marchionni L."/>
            <person name="Matsuda H."/>
            <person name="Matsuzawa S."/>
            <person name="Miki H."/>
            <person name="Mignone F."/>
            <person name="Miyake S."/>
            <person name="Morris K."/>
            <person name="Mottagui-Tabar S."/>
            <person name="Mulder N."/>
            <person name="Nakano N."/>
            <person name="Nakauchi H."/>
            <person name="Ng P."/>
            <person name="Nilsson R."/>
            <person name="Nishiguchi S."/>
            <person name="Nishikawa S."/>
            <person name="Nori F."/>
            <person name="Ohara O."/>
            <person name="Okazaki Y."/>
            <person name="Orlando V."/>
            <person name="Pang K.C."/>
            <person name="Pavan W.J."/>
            <person name="Pavesi G."/>
            <person name="Pesole G."/>
            <person name="Petrovsky N."/>
            <person name="Piazza S."/>
            <person name="Reed J."/>
            <person name="Reid J.F."/>
            <person name="Ring B.Z."/>
            <person name="Ringwald M."/>
            <person name="Rost B."/>
            <person name="Ruan Y."/>
            <person name="Salzberg S.L."/>
            <person name="Sandelin A."/>
            <person name="Schneider C."/>
            <person name="Schoenbach C."/>
            <person name="Sekiguchi K."/>
            <person name="Semple C.A."/>
            <person name="Seno S."/>
            <person name="Sessa L."/>
            <person name="Sheng Y."/>
            <person name="Shibata Y."/>
            <person name="Shimada H."/>
            <person name="Shimada K."/>
            <person name="Silva D."/>
            <person name="Sinclair B."/>
            <person name="Sperling S."/>
            <person name="Stupka E."/>
            <person name="Sugiura K."/>
            <person name="Sultana R."/>
            <person name="Takenaka Y."/>
            <person name="Taki K."/>
            <person name="Tammoja K."/>
            <person name="Tan S.L."/>
            <person name="Tang S."/>
            <person name="Taylor M.S."/>
            <person name="Tegner J."/>
            <person name="Teichmann S.A."/>
            <person name="Ueda H.R."/>
            <person name="van Nimwegen E."/>
            <person name="Verardo R."/>
            <person name="Wei C.L."/>
            <person name="Yagi K."/>
            <person name="Yamanishi H."/>
            <person name="Zabarovsky E."/>
            <person name="Zhu S."/>
            <person name="Zimmer A."/>
            <person name="Hide W."/>
            <person name="Bult C."/>
            <person name="Grimmond S.M."/>
            <person name="Teasdale R.D."/>
            <person name="Liu E.T."/>
            <person name="Brusic V."/>
            <person name="Quackenbush J."/>
            <person name="Wahlestedt C."/>
            <person name="Mattick J.S."/>
            <person name="Hume D.A."/>
            <person name="Kai C."/>
            <person name="Sasaki D."/>
            <person name="Tomaru Y."/>
            <person name="Fukuda S."/>
            <person name="Kanamori-Katayama M."/>
            <person name="Suzuki M."/>
            <person name="Aoki J."/>
            <person name="Arakawa T."/>
            <person name="Iida J."/>
            <person name="Imamura K."/>
            <person name="Itoh M."/>
            <person name="Kato T."/>
            <person name="Kawaji H."/>
            <person name="Kawagashira N."/>
            <person name="Kawashima T."/>
            <person name="Kojima M."/>
            <person name="Kondo S."/>
            <person name="Konno H."/>
            <person name="Nakano K."/>
            <person name="Ninomiya N."/>
            <person name="Nishio T."/>
            <person name="Okada M."/>
            <person name="Plessy C."/>
            <person name="Shibata K."/>
            <person name="Shiraki T."/>
            <person name="Suzuki S."/>
            <person name="Tagami M."/>
            <person name="Waki K."/>
            <person name="Watahiki A."/>
            <person name="Okamura-Oho Y."/>
            <person name="Suzuki H."/>
            <person name="Kawai J."/>
            <person name="Hayashizaki Y."/>
        </authorList>
    </citation>
    <scope>NUCLEOTIDE SEQUENCE [LARGE SCALE MRNA] (ISOFORMS 1 AND 2)</scope>
    <source>
        <strain>C57BL/6J</strain>
        <tissue>Hypothalamus</tissue>
        <tissue>Testis</tissue>
    </source>
</reference>
<reference key="2">
    <citation type="journal article" date="2009" name="PLoS Biol.">
        <title>Lineage-specific biology revealed by a finished genome assembly of the mouse.</title>
        <authorList>
            <person name="Church D.M."/>
            <person name="Goodstadt L."/>
            <person name="Hillier L.W."/>
            <person name="Zody M.C."/>
            <person name="Goldstein S."/>
            <person name="She X."/>
            <person name="Bult C.J."/>
            <person name="Agarwala R."/>
            <person name="Cherry J.L."/>
            <person name="DiCuccio M."/>
            <person name="Hlavina W."/>
            <person name="Kapustin Y."/>
            <person name="Meric P."/>
            <person name="Maglott D."/>
            <person name="Birtle Z."/>
            <person name="Marques A.C."/>
            <person name="Graves T."/>
            <person name="Zhou S."/>
            <person name="Teague B."/>
            <person name="Potamousis K."/>
            <person name="Churas C."/>
            <person name="Place M."/>
            <person name="Herschleb J."/>
            <person name="Runnheim R."/>
            <person name="Forrest D."/>
            <person name="Amos-Landgraf J."/>
            <person name="Schwartz D.C."/>
            <person name="Cheng Z."/>
            <person name="Lindblad-Toh K."/>
            <person name="Eichler E.E."/>
            <person name="Ponting C.P."/>
        </authorList>
    </citation>
    <scope>NUCLEOTIDE SEQUENCE [LARGE SCALE GENOMIC DNA]</scope>
    <source>
        <strain>C57BL/6J</strain>
    </source>
</reference>
<reference key="3">
    <citation type="journal article" date="2004" name="Genome Res.">
        <title>The status, quality, and expansion of the NIH full-length cDNA project: the Mammalian Gene Collection (MGC).</title>
        <authorList>
            <consortium name="The MGC Project Team"/>
        </authorList>
    </citation>
    <scope>NUCLEOTIDE SEQUENCE [LARGE SCALE MRNA] (ISOFORM 1)</scope>
</reference>